<evidence type="ECO:0000255" key="1">
    <source>
        <dbReference type="HAMAP-Rule" id="MF_00146"/>
    </source>
</evidence>
<reference key="1">
    <citation type="journal article" date="2000" name="Nature">
        <title>Complete DNA sequence of a serogroup A strain of Neisseria meningitidis Z2491.</title>
        <authorList>
            <person name="Parkhill J."/>
            <person name="Achtman M."/>
            <person name="James K.D."/>
            <person name="Bentley S.D."/>
            <person name="Churcher C.M."/>
            <person name="Klee S.R."/>
            <person name="Morelli G."/>
            <person name="Basham D."/>
            <person name="Brown D."/>
            <person name="Chillingworth T."/>
            <person name="Davies R.M."/>
            <person name="Davis P."/>
            <person name="Devlin K."/>
            <person name="Feltwell T."/>
            <person name="Hamlin N."/>
            <person name="Holroyd S."/>
            <person name="Jagels K."/>
            <person name="Leather S."/>
            <person name="Moule S."/>
            <person name="Mungall K.L."/>
            <person name="Quail M.A."/>
            <person name="Rajandream M.A."/>
            <person name="Rutherford K.M."/>
            <person name="Simmonds M."/>
            <person name="Skelton J."/>
            <person name="Whitehead S."/>
            <person name="Spratt B.G."/>
            <person name="Barrell B.G."/>
        </authorList>
    </citation>
    <scope>NUCLEOTIDE SEQUENCE [LARGE SCALE GENOMIC DNA]</scope>
    <source>
        <strain>DSM 15465 / Z2491</strain>
    </source>
</reference>
<accession>P63903</accession>
<accession>A1IR88</accession>
<accession>Q9JRE8</accession>
<comment type="function">
    <text evidence="1">Catalyzes the deamination of dCTP to dUTP.</text>
</comment>
<comment type="catalytic activity">
    <reaction evidence="1">
        <text>dCTP + H2O + H(+) = dUTP + NH4(+)</text>
        <dbReference type="Rhea" id="RHEA:22680"/>
        <dbReference type="ChEBI" id="CHEBI:15377"/>
        <dbReference type="ChEBI" id="CHEBI:15378"/>
        <dbReference type="ChEBI" id="CHEBI:28938"/>
        <dbReference type="ChEBI" id="CHEBI:61481"/>
        <dbReference type="ChEBI" id="CHEBI:61555"/>
        <dbReference type="EC" id="3.5.4.13"/>
    </reaction>
</comment>
<comment type="pathway">
    <text evidence="1">Pyrimidine metabolism; dUMP biosynthesis; dUMP from dCTP (dUTP route): step 1/2.</text>
</comment>
<comment type="subunit">
    <text evidence="1">Homotrimer.</text>
</comment>
<comment type="similarity">
    <text evidence="1">Belongs to the dCTP deaminase family.</text>
</comment>
<feature type="chain" id="PRO_0000155998" description="dCTP deaminase">
    <location>
        <begin position="1"/>
        <end position="188"/>
    </location>
</feature>
<feature type="active site" description="Proton donor/acceptor" evidence="1">
    <location>
        <position position="137"/>
    </location>
</feature>
<feature type="binding site" evidence="1">
    <location>
        <begin position="111"/>
        <end position="116"/>
    </location>
    <ligand>
        <name>dCTP</name>
        <dbReference type="ChEBI" id="CHEBI:61481"/>
    </ligand>
</feature>
<feature type="binding site" evidence="1">
    <location>
        <begin position="135"/>
        <end position="137"/>
    </location>
    <ligand>
        <name>dCTP</name>
        <dbReference type="ChEBI" id="CHEBI:61481"/>
    </ligand>
</feature>
<feature type="binding site" evidence="1">
    <location>
        <position position="156"/>
    </location>
    <ligand>
        <name>dCTP</name>
        <dbReference type="ChEBI" id="CHEBI:61481"/>
    </ligand>
</feature>
<feature type="binding site" evidence="1">
    <location>
        <position position="170"/>
    </location>
    <ligand>
        <name>dCTP</name>
        <dbReference type="ChEBI" id="CHEBI:61481"/>
    </ligand>
</feature>
<feature type="binding site" evidence="1">
    <location>
        <position position="180"/>
    </location>
    <ligand>
        <name>dCTP</name>
        <dbReference type="ChEBI" id="CHEBI:61481"/>
    </ligand>
</feature>
<name>DCD_NEIMA</name>
<organism>
    <name type="scientific">Neisseria meningitidis serogroup A / serotype 4A (strain DSM 15465 / Z2491)</name>
    <dbReference type="NCBI Taxonomy" id="122587"/>
    <lineage>
        <taxon>Bacteria</taxon>
        <taxon>Pseudomonadati</taxon>
        <taxon>Pseudomonadota</taxon>
        <taxon>Betaproteobacteria</taxon>
        <taxon>Neisseriales</taxon>
        <taxon>Neisseriaceae</taxon>
        <taxon>Neisseria</taxon>
    </lineage>
</organism>
<sequence length="188" mass="21295">MSIKSDKWIRRMSEEFGMIDPFEPNQIKEADGKRIISYGTSSYGYDIRCANEFKIFTNINSTIVDPKNFDPKNFVTVEDDCCIIPPNSFALARTVEYFRIPRNVLTVCLGKSTYARCGIIVNVTPFEPEWEGYVTLEFSNTTPLPAKIYAGEGVAQVLFFESDEICETSYKDRNGKYMGQTGVTLPKA</sequence>
<protein>
    <recommendedName>
        <fullName evidence="1">dCTP deaminase</fullName>
        <ecNumber evidence="1">3.5.4.13</ecNumber>
    </recommendedName>
    <alternativeName>
        <fullName evidence="1">Deoxycytidine triphosphate deaminase</fullName>
    </alternativeName>
</protein>
<keyword id="KW-0378">Hydrolase</keyword>
<keyword id="KW-0546">Nucleotide metabolism</keyword>
<keyword id="KW-0547">Nucleotide-binding</keyword>
<proteinExistence type="inferred from homology"/>
<gene>
    <name evidence="1" type="primary">dcd</name>
    <name type="ordered locus">NMA1060</name>
</gene>
<dbReference type="EC" id="3.5.4.13" evidence="1"/>
<dbReference type="EMBL" id="AL157959">
    <property type="protein sequence ID" value="CAM08274.1"/>
    <property type="molecule type" value="Genomic_DNA"/>
</dbReference>
<dbReference type="RefSeq" id="WP_002224592.1">
    <property type="nucleotide sequence ID" value="NC_003116.1"/>
</dbReference>
<dbReference type="SMR" id="P63903"/>
<dbReference type="EnsemblBacteria" id="CAM08274">
    <property type="protein sequence ID" value="CAM08274"/>
    <property type="gene ID" value="NMA1060"/>
</dbReference>
<dbReference type="GeneID" id="93386330"/>
<dbReference type="KEGG" id="nma:NMA1060"/>
<dbReference type="HOGENOM" id="CLU_087476_4_0_4"/>
<dbReference type="UniPathway" id="UPA00610">
    <property type="reaction ID" value="UER00665"/>
</dbReference>
<dbReference type="Proteomes" id="UP000000626">
    <property type="component" value="Chromosome"/>
</dbReference>
<dbReference type="GO" id="GO:0008829">
    <property type="term" value="F:dCTP deaminase activity"/>
    <property type="evidence" value="ECO:0007669"/>
    <property type="project" value="UniProtKB-UniRule"/>
</dbReference>
<dbReference type="GO" id="GO:0000166">
    <property type="term" value="F:nucleotide binding"/>
    <property type="evidence" value="ECO:0007669"/>
    <property type="project" value="UniProtKB-KW"/>
</dbReference>
<dbReference type="GO" id="GO:0006226">
    <property type="term" value="P:dUMP biosynthetic process"/>
    <property type="evidence" value="ECO:0007669"/>
    <property type="project" value="UniProtKB-UniPathway"/>
</dbReference>
<dbReference type="GO" id="GO:0006229">
    <property type="term" value="P:dUTP biosynthetic process"/>
    <property type="evidence" value="ECO:0007669"/>
    <property type="project" value="UniProtKB-UniRule"/>
</dbReference>
<dbReference type="GO" id="GO:0015949">
    <property type="term" value="P:nucleobase-containing small molecule interconversion"/>
    <property type="evidence" value="ECO:0007669"/>
    <property type="project" value="TreeGrafter"/>
</dbReference>
<dbReference type="CDD" id="cd07557">
    <property type="entry name" value="trimeric_dUTPase"/>
    <property type="match status" value="1"/>
</dbReference>
<dbReference type="FunFam" id="2.70.40.10:FF:000001">
    <property type="entry name" value="dCTP deaminase"/>
    <property type="match status" value="1"/>
</dbReference>
<dbReference type="Gene3D" id="2.70.40.10">
    <property type="match status" value="1"/>
</dbReference>
<dbReference type="HAMAP" id="MF_00146">
    <property type="entry name" value="dCTP_deaminase"/>
    <property type="match status" value="1"/>
</dbReference>
<dbReference type="InterPro" id="IPR011962">
    <property type="entry name" value="dCTP_deaminase"/>
</dbReference>
<dbReference type="InterPro" id="IPR036157">
    <property type="entry name" value="dUTPase-like_sf"/>
</dbReference>
<dbReference type="InterPro" id="IPR033704">
    <property type="entry name" value="dUTPase_trimeric"/>
</dbReference>
<dbReference type="NCBIfam" id="TIGR02274">
    <property type="entry name" value="dCTP_deam"/>
    <property type="match status" value="1"/>
</dbReference>
<dbReference type="PANTHER" id="PTHR42680">
    <property type="entry name" value="DCTP DEAMINASE"/>
    <property type="match status" value="1"/>
</dbReference>
<dbReference type="PANTHER" id="PTHR42680:SF3">
    <property type="entry name" value="DCTP DEAMINASE"/>
    <property type="match status" value="1"/>
</dbReference>
<dbReference type="Pfam" id="PF22769">
    <property type="entry name" value="DCD"/>
    <property type="match status" value="1"/>
</dbReference>
<dbReference type="SUPFAM" id="SSF51283">
    <property type="entry name" value="dUTPase-like"/>
    <property type="match status" value="1"/>
</dbReference>